<gene>
    <name evidence="1" type="primary">argS</name>
    <name type="ordered locus">CGSHiGG_10215</name>
</gene>
<proteinExistence type="inferred from homology"/>
<reference key="1">
    <citation type="journal article" date="2007" name="Genome Biol.">
        <title>Characterization and modeling of the Haemophilus influenzae core and supragenomes based on the complete genomic sequences of Rd and 12 clinical nontypeable strains.</title>
        <authorList>
            <person name="Hogg J.S."/>
            <person name="Hu F.Z."/>
            <person name="Janto B."/>
            <person name="Boissy R."/>
            <person name="Hayes J."/>
            <person name="Keefe R."/>
            <person name="Post J.C."/>
            <person name="Ehrlich G.D."/>
        </authorList>
    </citation>
    <scope>NUCLEOTIDE SEQUENCE [LARGE SCALE GENOMIC DNA]</scope>
    <source>
        <strain>PittGG</strain>
    </source>
</reference>
<sequence>MNIQSILSDKIKQAMILAGADQSCDALIRQSGKPQFGDYQANGIMAAAKKLGLNPREFAQKVLDNAQLSDIAEKLEIAGPGFINIFLNPTWLTTEISAALSHKNLGIQATNKQTVVIDYSSPNVAKEMHVGHLRSTIIGDAVARTLEFLGHNVIRANHVGDWGTQFGMLIAYLEKMQHEHASEMELQDLEAFYREAKKHYDEDEIFAEKARNYVVKLQSGDEYCRTMWKRLVDITMQQNQHNYNRLNVTLTEKDVMGESLYNPMLPSIVEDLKKQGLAVENDGALVVYLDEFKNKDGDPMGVIVQKKDGGFLYTTTDIAAAKYRYETLKANRALVFSDTRQSQHMQQAWLITRKAGYVPDSFSLEHKNFGMMLGKDGKPFKTRTGGTIKLADLLDEAIERATVLINEKNTNLSNDEKEAVIEAVGIGAVKYADLSKNRTTDYVFDWDNMLSFEGNTAPYMQYAYTRIRSIFNKTDINSTALLAAPLTIKDDKERTLAIKLLQFEEAVQTVGKEGTPHVLCAYLYELAGIFSSFYEHCPILNAEDESIKLSRLKLALLTEKTLKQGLTLLGIKTVEKM</sequence>
<name>SYR_HAEIG</name>
<protein>
    <recommendedName>
        <fullName evidence="1">Arginine--tRNA ligase</fullName>
        <ecNumber evidence="1">6.1.1.19</ecNumber>
    </recommendedName>
    <alternativeName>
        <fullName evidence="1">Arginyl-tRNA synthetase</fullName>
        <shortName evidence="1">ArgRS</shortName>
    </alternativeName>
</protein>
<feature type="chain" id="PRO_1000018036" description="Arginine--tRNA ligase">
    <location>
        <begin position="1"/>
        <end position="577"/>
    </location>
</feature>
<feature type="short sequence motif" description="'HIGH' region">
    <location>
        <begin position="122"/>
        <end position="132"/>
    </location>
</feature>
<evidence type="ECO:0000255" key="1">
    <source>
        <dbReference type="HAMAP-Rule" id="MF_00123"/>
    </source>
</evidence>
<keyword id="KW-0030">Aminoacyl-tRNA synthetase</keyword>
<keyword id="KW-0067">ATP-binding</keyword>
<keyword id="KW-0963">Cytoplasm</keyword>
<keyword id="KW-0436">Ligase</keyword>
<keyword id="KW-0547">Nucleotide-binding</keyword>
<keyword id="KW-0648">Protein biosynthesis</keyword>
<organism>
    <name type="scientific">Haemophilus influenzae (strain PittGG)</name>
    <dbReference type="NCBI Taxonomy" id="374931"/>
    <lineage>
        <taxon>Bacteria</taxon>
        <taxon>Pseudomonadati</taxon>
        <taxon>Pseudomonadota</taxon>
        <taxon>Gammaproteobacteria</taxon>
        <taxon>Pasteurellales</taxon>
        <taxon>Pasteurellaceae</taxon>
        <taxon>Haemophilus</taxon>
    </lineage>
</organism>
<comment type="catalytic activity">
    <reaction evidence="1">
        <text>tRNA(Arg) + L-arginine + ATP = L-arginyl-tRNA(Arg) + AMP + diphosphate</text>
        <dbReference type="Rhea" id="RHEA:20301"/>
        <dbReference type="Rhea" id="RHEA-COMP:9658"/>
        <dbReference type="Rhea" id="RHEA-COMP:9673"/>
        <dbReference type="ChEBI" id="CHEBI:30616"/>
        <dbReference type="ChEBI" id="CHEBI:32682"/>
        <dbReference type="ChEBI" id="CHEBI:33019"/>
        <dbReference type="ChEBI" id="CHEBI:78442"/>
        <dbReference type="ChEBI" id="CHEBI:78513"/>
        <dbReference type="ChEBI" id="CHEBI:456215"/>
        <dbReference type="EC" id="6.1.1.19"/>
    </reaction>
</comment>
<comment type="subunit">
    <text evidence="1">Monomer.</text>
</comment>
<comment type="subcellular location">
    <subcellularLocation>
        <location evidence="1">Cytoplasm</location>
    </subcellularLocation>
</comment>
<comment type="similarity">
    <text evidence="1">Belongs to the class-I aminoacyl-tRNA synthetase family.</text>
</comment>
<dbReference type="EC" id="6.1.1.19" evidence="1"/>
<dbReference type="EMBL" id="CP000672">
    <property type="protein sequence ID" value="ABR00796.1"/>
    <property type="molecule type" value="Genomic_DNA"/>
</dbReference>
<dbReference type="SMR" id="A5UJ40"/>
<dbReference type="KEGG" id="hiq:CGSHiGG_10215"/>
<dbReference type="HOGENOM" id="CLU_006406_5_1_6"/>
<dbReference type="Proteomes" id="UP000001990">
    <property type="component" value="Chromosome"/>
</dbReference>
<dbReference type="GO" id="GO:0005737">
    <property type="term" value="C:cytoplasm"/>
    <property type="evidence" value="ECO:0007669"/>
    <property type="project" value="UniProtKB-SubCell"/>
</dbReference>
<dbReference type="GO" id="GO:0004814">
    <property type="term" value="F:arginine-tRNA ligase activity"/>
    <property type="evidence" value="ECO:0007669"/>
    <property type="project" value="UniProtKB-UniRule"/>
</dbReference>
<dbReference type="GO" id="GO:0005524">
    <property type="term" value="F:ATP binding"/>
    <property type="evidence" value="ECO:0007669"/>
    <property type="project" value="UniProtKB-UniRule"/>
</dbReference>
<dbReference type="GO" id="GO:0006420">
    <property type="term" value="P:arginyl-tRNA aminoacylation"/>
    <property type="evidence" value="ECO:0007669"/>
    <property type="project" value="UniProtKB-UniRule"/>
</dbReference>
<dbReference type="CDD" id="cd07956">
    <property type="entry name" value="Anticodon_Ia_Arg"/>
    <property type="match status" value="1"/>
</dbReference>
<dbReference type="CDD" id="cd00671">
    <property type="entry name" value="ArgRS_core"/>
    <property type="match status" value="1"/>
</dbReference>
<dbReference type="FunFam" id="1.10.730.10:FF:000001">
    <property type="entry name" value="Arginine--tRNA ligase"/>
    <property type="match status" value="1"/>
</dbReference>
<dbReference type="FunFam" id="3.40.50.620:FF:000030">
    <property type="entry name" value="Arginine--tRNA ligase"/>
    <property type="match status" value="1"/>
</dbReference>
<dbReference type="Gene3D" id="3.30.1360.70">
    <property type="entry name" value="Arginyl tRNA synthetase N-terminal domain"/>
    <property type="match status" value="1"/>
</dbReference>
<dbReference type="Gene3D" id="3.40.50.620">
    <property type="entry name" value="HUPs"/>
    <property type="match status" value="1"/>
</dbReference>
<dbReference type="Gene3D" id="1.10.730.10">
    <property type="entry name" value="Isoleucyl-tRNA Synthetase, Domain 1"/>
    <property type="match status" value="1"/>
</dbReference>
<dbReference type="HAMAP" id="MF_00123">
    <property type="entry name" value="Arg_tRNA_synth"/>
    <property type="match status" value="1"/>
</dbReference>
<dbReference type="InterPro" id="IPR001412">
    <property type="entry name" value="aa-tRNA-synth_I_CS"/>
</dbReference>
<dbReference type="InterPro" id="IPR001278">
    <property type="entry name" value="Arg-tRNA-ligase"/>
</dbReference>
<dbReference type="InterPro" id="IPR005148">
    <property type="entry name" value="Arg-tRNA-synth_N"/>
</dbReference>
<dbReference type="InterPro" id="IPR036695">
    <property type="entry name" value="Arg-tRNA-synth_N_sf"/>
</dbReference>
<dbReference type="InterPro" id="IPR035684">
    <property type="entry name" value="ArgRS_core"/>
</dbReference>
<dbReference type="InterPro" id="IPR008909">
    <property type="entry name" value="DALR_anticod-bd"/>
</dbReference>
<dbReference type="InterPro" id="IPR014729">
    <property type="entry name" value="Rossmann-like_a/b/a_fold"/>
</dbReference>
<dbReference type="InterPro" id="IPR009080">
    <property type="entry name" value="tRNAsynth_Ia_anticodon-bd"/>
</dbReference>
<dbReference type="NCBIfam" id="TIGR00456">
    <property type="entry name" value="argS"/>
    <property type="match status" value="1"/>
</dbReference>
<dbReference type="PANTHER" id="PTHR11956:SF5">
    <property type="entry name" value="ARGININE--TRNA LIGASE, CYTOPLASMIC"/>
    <property type="match status" value="1"/>
</dbReference>
<dbReference type="PANTHER" id="PTHR11956">
    <property type="entry name" value="ARGINYL-TRNA SYNTHETASE"/>
    <property type="match status" value="1"/>
</dbReference>
<dbReference type="Pfam" id="PF03485">
    <property type="entry name" value="Arg_tRNA_synt_N"/>
    <property type="match status" value="1"/>
</dbReference>
<dbReference type="Pfam" id="PF05746">
    <property type="entry name" value="DALR_1"/>
    <property type="match status" value="1"/>
</dbReference>
<dbReference type="Pfam" id="PF00750">
    <property type="entry name" value="tRNA-synt_1d"/>
    <property type="match status" value="1"/>
</dbReference>
<dbReference type="PRINTS" id="PR01038">
    <property type="entry name" value="TRNASYNTHARG"/>
</dbReference>
<dbReference type="SMART" id="SM01016">
    <property type="entry name" value="Arg_tRNA_synt_N"/>
    <property type="match status" value="1"/>
</dbReference>
<dbReference type="SMART" id="SM00836">
    <property type="entry name" value="DALR_1"/>
    <property type="match status" value="1"/>
</dbReference>
<dbReference type="SUPFAM" id="SSF47323">
    <property type="entry name" value="Anticodon-binding domain of a subclass of class I aminoacyl-tRNA synthetases"/>
    <property type="match status" value="1"/>
</dbReference>
<dbReference type="SUPFAM" id="SSF55190">
    <property type="entry name" value="Arginyl-tRNA synthetase (ArgRS), N-terminal 'additional' domain"/>
    <property type="match status" value="1"/>
</dbReference>
<dbReference type="SUPFAM" id="SSF52374">
    <property type="entry name" value="Nucleotidylyl transferase"/>
    <property type="match status" value="1"/>
</dbReference>
<dbReference type="PROSITE" id="PS00178">
    <property type="entry name" value="AA_TRNA_LIGASE_I"/>
    <property type="match status" value="1"/>
</dbReference>
<accession>A5UJ40</accession>